<evidence type="ECO:0000255" key="1"/>
<evidence type="ECO:0000305" key="2"/>
<accession>P81313</accession>
<comment type="subcellular location">
    <subcellularLocation>
        <location evidence="2">Cell membrane</location>
        <topology evidence="2">Multi-pass membrane protein</topology>
    </subcellularLocation>
</comment>
<sequence>MNFEKKLNGILSFTYLALVLCLVMPFMLILVLDTTFTFNKFNLNFVYRQIVELIVLSIFAGFITSFALYNKICRISTEELKRDILENNGLKTIFKIAQYEVMVSIFYSLLLLIILLNKQLLYYGFTAIFQIFFTFCAIFVPLFIFGSLVCRTILLHKIRGTT</sequence>
<name>Y79A_METJA</name>
<reference key="1">
    <citation type="journal article" date="1996" name="Science">
        <title>Complete genome sequence of the methanogenic archaeon, Methanococcus jannaschii.</title>
        <authorList>
            <person name="Bult C.J."/>
            <person name="White O."/>
            <person name="Olsen G.J."/>
            <person name="Zhou L."/>
            <person name="Fleischmann R.D."/>
            <person name="Sutton G.G."/>
            <person name="Blake J.A."/>
            <person name="FitzGerald L.M."/>
            <person name="Clayton R.A."/>
            <person name="Gocayne J.D."/>
            <person name="Kerlavage A.R."/>
            <person name="Dougherty B.A."/>
            <person name="Tomb J.-F."/>
            <person name="Adams M.D."/>
            <person name="Reich C.I."/>
            <person name="Overbeek R."/>
            <person name="Kirkness E.F."/>
            <person name="Weinstock K.G."/>
            <person name="Merrick J.M."/>
            <person name="Glodek A."/>
            <person name="Scott J.L."/>
            <person name="Geoghagen N.S.M."/>
            <person name="Weidman J.F."/>
            <person name="Fuhrmann J.L."/>
            <person name="Nguyen D."/>
            <person name="Utterback T.R."/>
            <person name="Kelley J.M."/>
            <person name="Peterson J.D."/>
            <person name="Sadow P.W."/>
            <person name="Hanna M.C."/>
            <person name="Cotton M.D."/>
            <person name="Roberts K.M."/>
            <person name="Hurst M.A."/>
            <person name="Kaine B.P."/>
            <person name="Borodovsky M."/>
            <person name="Klenk H.-P."/>
            <person name="Fraser C.M."/>
            <person name="Smith H.O."/>
            <person name="Woese C.R."/>
            <person name="Venter J.C."/>
        </authorList>
    </citation>
    <scope>NUCLEOTIDE SEQUENCE [LARGE SCALE GENOMIC DNA]</scope>
    <source>
        <strain>ATCC 43067 / DSM 2661 / JAL-1 / JCM 10045 / NBRC 100440</strain>
    </source>
</reference>
<protein>
    <recommendedName>
        <fullName>Uncharacterized protein MJ0792.1</fullName>
    </recommendedName>
</protein>
<dbReference type="EMBL" id="L77117">
    <property type="protein sequence ID" value="AAB98800.1"/>
    <property type="molecule type" value="Genomic_DNA"/>
</dbReference>
<dbReference type="RefSeq" id="WP_010870300.1">
    <property type="nucleotide sequence ID" value="NC_000909.1"/>
</dbReference>
<dbReference type="SMR" id="P81313"/>
<dbReference type="STRING" id="243232.MJ_0792.1"/>
<dbReference type="PaxDb" id="243232-MJ_0792.1"/>
<dbReference type="EnsemblBacteria" id="AAB98800">
    <property type="protein sequence ID" value="AAB98800"/>
    <property type="gene ID" value="MJ_0792.1"/>
</dbReference>
<dbReference type="GeneID" id="1451672"/>
<dbReference type="KEGG" id="mja:MJ_0792.1"/>
<dbReference type="HOGENOM" id="CLU_1631661_0_0_2"/>
<dbReference type="InParanoid" id="P81313"/>
<dbReference type="Proteomes" id="UP000000805">
    <property type="component" value="Chromosome"/>
</dbReference>
<dbReference type="GO" id="GO:0005886">
    <property type="term" value="C:plasma membrane"/>
    <property type="evidence" value="ECO:0007669"/>
    <property type="project" value="UniProtKB-SubCell"/>
</dbReference>
<proteinExistence type="predicted"/>
<feature type="chain" id="PRO_0000107043" description="Uncharacterized protein MJ0792.1">
    <location>
        <begin position="1"/>
        <end position="162"/>
    </location>
</feature>
<feature type="transmembrane region" description="Helical" evidence="1">
    <location>
        <begin position="10"/>
        <end position="30"/>
    </location>
</feature>
<feature type="transmembrane region" description="Helical" evidence="1">
    <location>
        <begin position="50"/>
        <end position="70"/>
    </location>
</feature>
<feature type="transmembrane region" description="Helical" evidence="1">
    <location>
        <begin position="96"/>
        <end position="116"/>
    </location>
</feature>
<feature type="transmembrane region" description="Helical" evidence="1">
    <location>
        <begin position="125"/>
        <end position="145"/>
    </location>
</feature>
<organism>
    <name type="scientific">Methanocaldococcus jannaschii (strain ATCC 43067 / DSM 2661 / JAL-1 / JCM 10045 / NBRC 100440)</name>
    <name type="common">Methanococcus jannaschii</name>
    <dbReference type="NCBI Taxonomy" id="243232"/>
    <lineage>
        <taxon>Archaea</taxon>
        <taxon>Methanobacteriati</taxon>
        <taxon>Methanobacteriota</taxon>
        <taxon>Methanomada group</taxon>
        <taxon>Methanococci</taxon>
        <taxon>Methanococcales</taxon>
        <taxon>Methanocaldococcaceae</taxon>
        <taxon>Methanocaldococcus</taxon>
    </lineage>
</organism>
<gene>
    <name type="ordered locus">MJ0792.1</name>
</gene>
<keyword id="KW-1003">Cell membrane</keyword>
<keyword id="KW-0472">Membrane</keyword>
<keyword id="KW-1185">Reference proteome</keyword>
<keyword id="KW-0812">Transmembrane</keyword>
<keyword id="KW-1133">Transmembrane helix</keyword>